<name>NLTPA_ARATH</name>
<sequence>MMRVVLPLCLLLASIFAWGSEAAISCNAVQANLYPCVVYVVQGGAIPYSCCNGIRMLSKQATSASDKQGVCRCIKSVVGRVSYSSIYLKKAAALPGKCGVKLPYKIDPSTNCNSIK</sequence>
<evidence type="ECO:0000250" key="1"/>
<evidence type="ECO:0000255" key="2"/>
<evidence type="ECO:0000305" key="3"/>
<proteinExistence type="inferred from homology"/>
<gene>
    <name type="primary">LTP10</name>
    <name type="ordered locus">At5g01870</name>
    <name type="ORF">T20L15.140</name>
</gene>
<reference key="1">
    <citation type="journal article" date="2000" name="Nature">
        <title>Sequence and analysis of chromosome 5 of the plant Arabidopsis thaliana.</title>
        <authorList>
            <person name="Tabata S."/>
            <person name="Kaneko T."/>
            <person name="Nakamura Y."/>
            <person name="Kotani H."/>
            <person name="Kato T."/>
            <person name="Asamizu E."/>
            <person name="Miyajima N."/>
            <person name="Sasamoto S."/>
            <person name="Kimura T."/>
            <person name="Hosouchi T."/>
            <person name="Kawashima K."/>
            <person name="Kohara M."/>
            <person name="Matsumoto M."/>
            <person name="Matsuno A."/>
            <person name="Muraki A."/>
            <person name="Nakayama S."/>
            <person name="Nakazaki N."/>
            <person name="Naruo K."/>
            <person name="Okumura S."/>
            <person name="Shinpo S."/>
            <person name="Takeuchi C."/>
            <person name="Wada T."/>
            <person name="Watanabe A."/>
            <person name="Yamada M."/>
            <person name="Yasuda M."/>
            <person name="Sato S."/>
            <person name="de la Bastide M."/>
            <person name="Huang E."/>
            <person name="Spiegel L."/>
            <person name="Gnoj L."/>
            <person name="O'Shaughnessy A."/>
            <person name="Preston R."/>
            <person name="Habermann K."/>
            <person name="Murray J."/>
            <person name="Johnson D."/>
            <person name="Rohlfing T."/>
            <person name="Nelson J."/>
            <person name="Stoneking T."/>
            <person name="Pepin K."/>
            <person name="Spieth J."/>
            <person name="Sekhon M."/>
            <person name="Armstrong J."/>
            <person name="Becker M."/>
            <person name="Belter E."/>
            <person name="Cordum H."/>
            <person name="Cordes M."/>
            <person name="Courtney L."/>
            <person name="Courtney W."/>
            <person name="Dante M."/>
            <person name="Du H."/>
            <person name="Edwards J."/>
            <person name="Fryman J."/>
            <person name="Haakensen B."/>
            <person name="Lamar E."/>
            <person name="Latreille P."/>
            <person name="Leonard S."/>
            <person name="Meyer R."/>
            <person name="Mulvaney E."/>
            <person name="Ozersky P."/>
            <person name="Riley A."/>
            <person name="Strowmatt C."/>
            <person name="Wagner-McPherson C."/>
            <person name="Wollam A."/>
            <person name="Yoakum M."/>
            <person name="Bell M."/>
            <person name="Dedhia N."/>
            <person name="Parnell L."/>
            <person name="Shah R."/>
            <person name="Rodriguez M."/>
            <person name="Hoon See L."/>
            <person name="Vil D."/>
            <person name="Baker J."/>
            <person name="Kirchoff K."/>
            <person name="Toth K."/>
            <person name="King L."/>
            <person name="Bahret A."/>
            <person name="Miller B."/>
            <person name="Marra M.A."/>
            <person name="Martienssen R."/>
            <person name="McCombie W.R."/>
            <person name="Wilson R.K."/>
            <person name="Murphy G."/>
            <person name="Bancroft I."/>
            <person name="Volckaert G."/>
            <person name="Wambutt R."/>
            <person name="Duesterhoeft A."/>
            <person name="Stiekema W."/>
            <person name="Pohl T."/>
            <person name="Entian K.-D."/>
            <person name="Terryn N."/>
            <person name="Hartley N."/>
            <person name="Bent E."/>
            <person name="Johnson S."/>
            <person name="Langham S.-A."/>
            <person name="McCullagh B."/>
            <person name="Robben J."/>
            <person name="Grymonprez B."/>
            <person name="Zimmermann W."/>
            <person name="Ramsperger U."/>
            <person name="Wedler H."/>
            <person name="Balke K."/>
            <person name="Wedler E."/>
            <person name="Peters S."/>
            <person name="van Staveren M."/>
            <person name="Dirkse W."/>
            <person name="Mooijman P."/>
            <person name="Klein Lankhorst R."/>
            <person name="Weitzenegger T."/>
            <person name="Bothe G."/>
            <person name="Rose M."/>
            <person name="Hauf J."/>
            <person name="Berneiser S."/>
            <person name="Hempel S."/>
            <person name="Feldpausch M."/>
            <person name="Lamberth S."/>
            <person name="Villarroel R."/>
            <person name="Gielen J."/>
            <person name="Ardiles W."/>
            <person name="Bents O."/>
            <person name="Lemcke K."/>
            <person name="Kolesov G."/>
            <person name="Mayer K.F.X."/>
            <person name="Rudd S."/>
            <person name="Schoof H."/>
            <person name="Schueller C."/>
            <person name="Zaccaria P."/>
            <person name="Mewes H.-W."/>
            <person name="Bevan M."/>
            <person name="Fransz P.F."/>
        </authorList>
    </citation>
    <scope>NUCLEOTIDE SEQUENCE [LARGE SCALE GENOMIC DNA]</scope>
    <source>
        <strain>cv. Columbia</strain>
    </source>
</reference>
<reference key="2">
    <citation type="journal article" date="2017" name="Plant J.">
        <title>Araport11: a complete reannotation of the Arabidopsis thaliana reference genome.</title>
        <authorList>
            <person name="Cheng C.Y."/>
            <person name="Krishnakumar V."/>
            <person name="Chan A.P."/>
            <person name="Thibaud-Nissen F."/>
            <person name="Schobel S."/>
            <person name="Town C.D."/>
        </authorList>
    </citation>
    <scope>GENOME REANNOTATION</scope>
    <source>
        <strain>cv. Columbia</strain>
    </source>
</reference>
<reference key="3">
    <citation type="journal article" date="2003" name="Science">
        <title>Empirical analysis of transcriptional activity in the Arabidopsis genome.</title>
        <authorList>
            <person name="Yamada K."/>
            <person name="Lim J."/>
            <person name="Dale J.M."/>
            <person name="Chen H."/>
            <person name="Shinn P."/>
            <person name="Palm C.J."/>
            <person name="Southwick A.M."/>
            <person name="Wu H.C."/>
            <person name="Kim C.J."/>
            <person name="Nguyen M."/>
            <person name="Pham P.K."/>
            <person name="Cheuk R.F."/>
            <person name="Karlin-Newmann G."/>
            <person name="Liu S.X."/>
            <person name="Lam B."/>
            <person name="Sakano H."/>
            <person name="Wu T."/>
            <person name="Yu G."/>
            <person name="Miranda M."/>
            <person name="Quach H.L."/>
            <person name="Tripp M."/>
            <person name="Chang C.H."/>
            <person name="Lee J.M."/>
            <person name="Toriumi M.J."/>
            <person name="Chan M.M."/>
            <person name="Tang C.C."/>
            <person name="Onodera C.S."/>
            <person name="Deng J.M."/>
            <person name="Akiyama K."/>
            <person name="Ansari Y."/>
            <person name="Arakawa T."/>
            <person name="Banh J."/>
            <person name="Banno F."/>
            <person name="Bowser L."/>
            <person name="Brooks S.Y."/>
            <person name="Carninci P."/>
            <person name="Chao Q."/>
            <person name="Choy N."/>
            <person name="Enju A."/>
            <person name="Goldsmith A.D."/>
            <person name="Gurjal M."/>
            <person name="Hansen N.F."/>
            <person name="Hayashizaki Y."/>
            <person name="Johnson-Hopson C."/>
            <person name="Hsuan V.W."/>
            <person name="Iida K."/>
            <person name="Karnes M."/>
            <person name="Khan S."/>
            <person name="Koesema E."/>
            <person name="Ishida J."/>
            <person name="Jiang P.X."/>
            <person name="Jones T."/>
            <person name="Kawai J."/>
            <person name="Kamiya A."/>
            <person name="Meyers C."/>
            <person name="Nakajima M."/>
            <person name="Narusaka M."/>
            <person name="Seki M."/>
            <person name="Sakurai T."/>
            <person name="Satou M."/>
            <person name="Tamse R."/>
            <person name="Vaysberg M."/>
            <person name="Wallender E.K."/>
            <person name="Wong C."/>
            <person name="Yamamura Y."/>
            <person name="Yuan S."/>
            <person name="Shinozaki K."/>
            <person name="Davis R.W."/>
            <person name="Theologis A."/>
            <person name="Ecker J.R."/>
        </authorList>
    </citation>
    <scope>NUCLEOTIDE SEQUENCE [LARGE SCALE MRNA]</scope>
    <source>
        <strain>cv. Columbia</strain>
    </source>
</reference>
<reference key="4">
    <citation type="submission" date="2006-07" db="EMBL/GenBank/DDBJ databases">
        <title>Large-scale analysis of RIKEN Arabidopsis full-length (RAFL) cDNAs.</title>
        <authorList>
            <person name="Totoki Y."/>
            <person name="Seki M."/>
            <person name="Ishida J."/>
            <person name="Nakajima M."/>
            <person name="Enju A."/>
            <person name="Kamiya A."/>
            <person name="Narusaka M."/>
            <person name="Shin-i T."/>
            <person name="Nakagawa M."/>
            <person name="Sakamoto N."/>
            <person name="Oishi K."/>
            <person name="Kohara Y."/>
            <person name="Kobayashi M."/>
            <person name="Toyoda A."/>
            <person name="Sakaki Y."/>
            <person name="Sakurai T."/>
            <person name="Iida K."/>
            <person name="Akiyama K."/>
            <person name="Satou M."/>
            <person name="Toyoda T."/>
            <person name="Konagaya A."/>
            <person name="Carninci P."/>
            <person name="Kawai J."/>
            <person name="Hayashizaki Y."/>
            <person name="Shinozaki K."/>
        </authorList>
    </citation>
    <scope>NUCLEOTIDE SEQUENCE [LARGE SCALE MRNA]</scope>
    <source>
        <strain>cv. Columbia</strain>
    </source>
</reference>
<reference key="5">
    <citation type="journal article" date="2008" name="Plant Physiol. Biochem.">
        <title>Plant pathogenesis-related (PR) proteins: a focus on PR peptides.</title>
        <authorList>
            <person name="Sels J."/>
            <person name="Mathys J."/>
            <person name="De Coninck B.M.A."/>
            <person name="Cammue B.P.A."/>
            <person name="De Bolle M.F.C."/>
        </authorList>
    </citation>
    <scope>GENE FAMILY</scope>
    <scope>NOMENCLATURE</scope>
</reference>
<dbReference type="EMBL" id="AL162351">
    <property type="protein sequence ID" value="CAB82757.1"/>
    <property type="molecule type" value="Genomic_DNA"/>
</dbReference>
<dbReference type="EMBL" id="CP002688">
    <property type="protein sequence ID" value="AED90403.1"/>
    <property type="molecule type" value="Genomic_DNA"/>
</dbReference>
<dbReference type="EMBL" id="BT004751">
    <property type="protein sequence ID" value="AAO44017.1"/>
    <property type="molecule type" value="mRNA"/>
</dbReference>
<dbReference type="EMBL" id="AK227988">
    <property type="protein sequence ID" value="BAE99954.1"/>
    <property type="molecule type" value="mRNA"/>
</dbReference>
<dbReference type="PIR" id="T48208">
    <property type="entry name" value="T48208"/>
</dbReference>
<dbReference type="RefSeq" id="NP_195807.1">
    <property type="nucleotide sequence ID" value="NM_120265.6"/>
</dbReference>
<dbReference type="SMR" id="Q9LZV9"/>
<dbReference type="BioGRID" id="16981">
    <property type="interactions" value="1"/>
</dbReference>
<dbReference type="STRING" id="3702.Q9LZV9"/>
<dbReference type="iPTMnet" id="Q9LZV9"/>
<dbReference type="SwissPalm" id="Q9LZV9"/>
<dbReference type="PaxDb" id="3702-AT5G01870.1"/>
<dbReference type="ProteomicsDB" id="251157"/>
<dbReference type="EnsemblPlants" id="AT5G01870.1">
    <property type="protein sequence ID" value="AT5G01870.1"/>
    <property type="gene ID" value="AT5G01870"/>
</dbReference>
<dbReference type="GeneID" id="831705"/>
<dbReference type="Gramene" id="AT5G01870.1">
    <property type="protein sequence ID" value="AT5G01870.1"/>
    <property type="gene ID" value="AT5G01870"/>
</dbReference>
<dbReference type="KEGG" id="ath:AT5G01870"/>
<dbReference type="Araport" id="AT5G01870"/>
<dbReference type="TAIR" id="AT5G01870"/>
<dbReference type="HOGENOM" id="CLU_128423_0_0_1"/>
<dbReference type="InParanoid" id="Q9LZV9"/>
<dbReference type="OMA" id="CGLQLPY"/>
<dbReference type="OrthoDB" id="1890443at2759"/>
<dbReference type="PhylomeDB" id="Q9LZV9"/>
<dbReference type="PRO" id="PR:Q9LZV9"/>
<dbReference type="Proteomes" id="UP000006548">
    <property type="component" value="Chromosome 5"/>
</dbReference>
<dbReference type="ExpressionAtlas" id="Q9LZV9">
    <property type="expression patterns" value="baseline and differential"/>
</dbReference>
<dbReference type="GO" id="GO:0005886">
    <property type="term" value="C:plasma membrane"/>
    <property type="evidence" value="ECO:0007005"/>
    <property type="project" value="TAIR"/>
</dbReference>
<dbReference type="GO" id="GO:0008289">
    <property type="term" value="F:lipid binding"/>
    <property type="evidence" value="ECO:0007669"/>
    <property type="project" value="UniProtKB-KW"/>
</dbReference>
<dbReference type="GO" id="GO:0006869">
    <property type="term" value="P:lipid transport"/>
    <property type="evidence" value="ECO:0007669"/>
    <property type="project" value="InterPro"/>
</dbReference>
<dbReference type="CDD" id="cd01960">
    <property type="entry name" value="nsLTP1"/>
    <property type="match status" value="1"/>
</dbReference>
<dbReference type="FunFam" id="1.10.110.10:FF:000002">
    <property type="entry name" value="Non-specific lipid-transfer protein"/>
    <property type="match status" value="1"/>
</dbReference>
<dbReference type="Gene3D" id="1.10.110.10">
    <property type="entry name" value="Plant lipid-transfer and hydrophobic proteins"/>
    <property type="match status" value="1"/>
</dbReference>
<dbReference type="InterPro" id="IPR036312">
    <property type="entry name" value="Bifun_inhib/LTP/seed_sf"/>
</dbReference>
<dbReference type="InterPro" id="IPR016140">
    <property type="entry name" value="Bifunc_inhib/LTP/seed_store"/>
</dbReference>
<dbReference type="InterPro" id="IPR000528">
    <property type="entry name" value="Plant_nsLTP"/>
</dbReference>
<dbReference type="PANTHER" id="PTHR33076">
    <property type="entry name" value="NON-SPECIFIC LIPID-TRANSFER PROTEIN 2-RELATED"/>
    <property type="match status" value="1"/>
</dbReference>
<dbReference type="Pfam" id="PF00234">
    <property type="entry name" value="Tryp_alpha_amyl"/>
    <property type="match status" value="1"/>
</dbReference>
<dbReference type="PRINTS" id="PR00382">
    <property type="entry name" value="LIPIDTRNSFER"/>
</dbReference>
<dbReference type="SMART" id="SM00499">
    <property type="entry name" value="AAI"/>
    <property type="match status" value="1"/>
</dbReference>
<dbReference type="SUPFAM" id="SSF47699">
    <property type="entry name" value="Bifunctional inhibitor/lipid-transfer protein/seed storage 2S albumin"/>
    <property type="match status" value="1"/>
</dbReference>
<dbReference type="PROSITE" id="PS00597">
    <property type="entry name" value="PLANT_LTP"/>
    <property type="match status" value="1"/>
</dbReference>
<accession>Q9LZV9</accession>
<protein>
    <recommendedName>
        <fullName>Non-specific lipid-transfer protein 10</fullName>
        <shortName>LTP 10</shortName>
    </recommendedName>
</protein>
<comment type="function">
    <text evidence="1">Plant non-specific lipid-transfer proteins transfer phospholipids as well as galactolipids across membranes. May play a role in wax or cutin deposition in the cell walls of expanding epidermal cells and certain secretory tissues (By similarity).</text>
</comment>
<comment type="similarity">
    <text evidence="3">Belongs to the plant LTP family.</text>
</comment>
<organism>
    <name type="scientific">Arabidopsis thaliana</name>
    <name type="common">Mouse-ear cress</name>
    <dbReference type="NCBI Taxonomy" id="3702"/>
    <lineage>
        <taxon>Eukaryota</taxon>
        <taxon>Viridiplantae</taxon>
        <taxon>Streptophyta</taxon>
        <taxon>Embryophyta</taxon>
        <taxon>Tracheophyta</taxon>
        <taxon>Spermatophyta</taxon>
        <taxon>Magnoliopsida</taxon>
        <taxon>eudicotyledons</taxon>
        <taxon>Gunneridae</taxon>
        <taxon>Pentapetalae</taxon>
        <taxon>rosids</taxon>
        <taxon>malvids</taxon>
        <taxon>Brassicales</taxon>
        <taxon>Brassicaceae</taxon>
        <taxon>Camelineae</taxon>
        <taxon>Arabidopsis</taxon>
    </lineage>
</organism>
<keyword id="KW-1015">Disulfide bond</keyword>
<keyword id="KW-0446">Lipid-binding</keyword>
<keyword id="KW-1185">Reference proteome</keyword>
<keyword id="KW-0732">Signal</keyword>
<keyword id="KW-0813">Transport</keyword>
<feature type="signal peptide" evidence="2">
    <location>
        <begin position="1"/>
        <end position="22"/>
    </location>
</feature>
<feature type="chain" id="PRO_0000355619" description="Non-specific lipid-transfer protein 10">
    <location>
        <begin position="23"/>
        <end position="116"/>
    </location>
</feature>
<feature type="disulfide bond" evidence="2">
    <location>
        <begin position="26"/>
        <end position="73"/>
    </location>
</feature>
<feature type="disulfide bond" evidence="2">
    <location>
        <begin position="36"/>
        <end position="50"/>
    </location>
</feature>
<feature type="disulfide bond" evidence="2">
    <location>
        <begin position="51"/>
        <end position="98"/>
    </location>
</feature>
<feature type="disulfide bond" evidence="2">
    <location>
        <begin position="71"/>
        <end position="112"/>
    </location>
</feature>